<evidence type="ECO:0000250" key="1"/>
<evidence type="ECO:0000255" key="2"/>
<evidence type="ECO:0000256" key="3">
    <source>
        <dbReference type="SAM" id="MobiDB-lite"/>
    </source>
</evidence>
<evidence type="ECO:0000305" key="4"/>
<proteinExistence type="inferred from homology"/>
<reference key="1">
    <citation type="journal article" date="1992" name="Virology">
        <title>The nucleotide sequence of apple stem grooving capillovirus genome.</title>
        <authorList>
            <person name="Yoshikawa N."/>
            <person name="Sasaki E."/>
            <person name="Kato M."/>
            <person name="Takahashi T."/>
        </authorList>
    </citation>
    <scope>NUCLEOTIDE SEQUENCE [GENOMIC RNA]</scope>
</reference>
<sequence>MAIVNVNRFLKEVESTDLKIDAISSSELYKDATFFKPDVLNCIKRFESNVKVSSRSGDGLVLSDFKLLDDTEIDSIRKKSNKYKYLHYGVILVGIKAMLPNFRGMEGRVIVYDGACLDPKRGHICSYLFKFESDCCYFGLRPEHCLSTTDANLAKRFRFRVDFDCPQYEQDTELFALDIGVAYRCVNSARFLETKTGDSGWASQAISGCEALKFNEEIKMAILDRRSPLFLEEGAPNVHIEKRLFRGDKVRRSRSISAKRGPNSRVQEKRGFRSLSARIERFGKNEFGRRASASEAPPGRSISMEDSHRPGKGTSDGSSP</sequence>
<comment type="function">
    <text evidence="1">May play a role in virus cell to cell movement by increasing the size exclusion limit of plasmodesmata and forming a complex with viral RNA to assist its movement (By similarity). May also have a papain-like protease activity and cleave the genome polyprotein.</text>
</comment>
<comment type="similarity">
    <text evidence="4">Belongs to the tobamoviruses movement protein family.</text>
</comment>
<protein>
    <recommendedName>
        <fullName>Probable movement protein</fullName>
        <ecNumber>3.4.21.-</ecNumber>
    </recommendedName>
    <alternativeName>
        <fullName>36 kDa protein</fullName>
    </alternativeName>
    <alternativeName>
        <fullName>ORF2 protein</fullName>
    </alternativeName>
</protein>
<feature type="chain" id="PRO_0000222543" description="Probable movement protein">
    <location>
        <begin position="1"/>
        <end position="320"/>
    </location>
</feature>
<feature type="region of interest" description="Disordered" evidence="3">
    <location>
        <begin position="251"/>
        <end position="270"/>
    </location>
</feature>
<feature type="region of interest" description="Disordered" evidence="3">
    <location>
        <begin position="286"/>
        <end position="320"/>
    </location>
</feature>
<feature type="active site" evidence="2">
    <location>
        <position position="144"/>
    </location>
</feature>
<feature type="active site" evidence="2">
    <location>
        <position position="171"/>
    </location>
</feature>
<feature type="active site" evidence="2">
    <location>
        <position position="199"/>
    </location>
</feature>
<dbReference type="EC" id="3.4.21.-"/>
<dbReference type="EMBL" id="D14995">
    <property type="protein sequence ID" value="BAA03640.1"/>
    <property type="molecule type" value="Genomic_RNA"/>
</dbReference>
<dbReference type="PIR" id="B44059">
    <property type="entry name" value="B44059"/>
</dbReference>
<dbReference type="RefSeq" id="NP_044336.1">
    <property type="nucleotide sequence ID" value="NC_001749.2"/>
</dbReference>
<dbReference type="GeneID" id="1494894"/>
<dbReference type="KEGG" id="vg:1494894"/>
<dbReference type="Proteomes" id="UP000000396">
    <property type="component" value="Segment"/>
</dbReference>
<dbReference type="GO" id="GO:0003723">
    <property type="term" value="F:RNA binding"/>
    <property type="evidence" value="ECO:0007669"/>
    <property type="project" value="UniProtKB-KW"/>
</dbReference>
<dbReference type="GO" id="GO:0004252">
    <property type="term" value="F:serine-type endopeptidase activity"/>
    <property type="evidence" value="ECO:0007669"/>
    <property type="project" value="InterPro"/>
</dbReference>
<dbReference type="GO" id="GO:0006508">
    <property type="term" value="P:proteolysis"/>
    <property type="evidence" value="ECO:0007669"/>
    <property type="project" value="InterPro"/>
</dbReference>
<dbReference type="GO" id="GO:0046740">
    <property type="term" value="P:transport of virus in host, cell to cell"/>
    <property type="evidence" value="ECO:0007669"/>
    <property type="project" value="UniProtKB-KW"/>
</dbReference>
<dbReference type="InterPro" id="IPR001815">
    <property type="entry name" value="Trichovirus_mp"/>
</dbReference>
<dbReference type="InterPro" id="IPR028919">
    <property type="entry name" value="Viral_movement"/>
</dbReference>
<dbReference type="Pfam" id="PF01107">
    <property type="entry name" value="MP"/>
    <property type="match status" value="1"/>
</dbReference>
<dbReference type="PRINTS" id="PR00995">
    <property type="entry name" value="CAPILLOPTASE"/>
</dbReference>
<name>MP_ASGVP</name>
<accession>P36698</accession>
<organismHost>
    <name type="scientific">Malus sylvestris</name>
    <name type="common">European crab apple</name>
    <dbReference type="NCBI Taxonomy" id="3752"/>
</organismHost>
<organism>
    <name type="scientific">Apple stem grooving virus (strain P-209)</name>
    <name type="common">ASGV</name>
    <dbReference type="NCBI Taxonomy" id="36402"/>
    <lineage>
        <taxon>Viruses</taxon>
        <taxon>Riboviria</taxon>
        <taxon>Orthornavirae</taxon>
        <taxon>Kitrinoviricota</taxon>
        <taxon>Alsuviricetes</taxon>
        <taxon>Tymovirales</taxon>
        <taxon>Betaflexiviridae</taxon>
        <taxon>Trivirinae</taxon>
        <taxon>Capillovirus</taxon>
        <taxon>Capillovirus mali</taxon>
    </lineage>
</organism>
<keyword id="KW-0378">Hydrolase</keyword>
<keyword id="KW-1185">Reference proteome</keyword>
<keyword id="KW-0694">RNA-binding</keyword>
<keyword id="KW-0813">Transport</keyword>
<keyword id="KW-0916">Viral movement protein</keyword>